<comment type="function">
    <text evidence="1">Endonuclease that specifically degrades the RNA of RNA-DNA hybrids.</text>
</comment>
<comment type="catalytic activity">
    <reaction evidence="1">
        <text>Endonucleolytic cleavage to 5'-phosphomonoester.</text>
        <dbReference type="EC" id="3.1.26.4"/>
    </reaction>
</comment>
<comment type="cofactor">
    <cofactor evidence="1">
        <name>Mn(2+)</name>
        <dbReference type="ChEBI" id="CHEBI:29035"/>
    </cofactor>
    <cofactor evidence="1">
        <name>Mg(2+)</name>
        <dbReference type="ChEBI" id="CHEBI:18420"/>
    </cofactor>
    <text evidence="1">Manganese or magnesium. Binds 1 divalent metal ion per monomer in the absence of substrate. May bind a second metal ion after substrate binding.</text>
</comment>
<comment type="subcellular location">
    <subcellularLocation>
        <location evidence="1">Cytoplasm</location>
    </subcellularLocation>
</comment>
<comment type="similarity">
    <text evidence="1">Belongs to the RNase HII family.</text>
</comment>
<proteinExistence type="inferred from homology"/>
<organism>
    <name type="scientific">Bacillus anthracis (strain A0248)</name>
    <dbReference type="NCBI Taxonomy" id="592021"/>
    <lineage>
        <taxon>Bacteria</taxon>
        <taxon>Bacillati</taxon>
        <taxon>Bacillota</taxon>
        <taxon>Bacilli</taxon>
        <taxon>Bacillales</taxon>
        <taxon>Bacillaceae</taxon>
        <taxon>Bacillus</taxon>
        <taxon>Bacillus cereus group</taxon>
    </lineage>
</organism>
<reference key="1">
    <citation type="submission" date="2009-04" db="EMBL/GenBank/DDBJ databases">
        <title>Genome sequence of Bacillus anthracis A0248.</title>
        <authorList>
            <person name="Dodson R.J."/>
            <person name="Munk A.C."/>
            <person name="Bruce D."/>
            <person name="Detter C."/>
            <person name="Tapia R."/>
            <person name="Sutton G."/>
            <person name="Sims D."/>
            <person name="Brettin T."/>
        </authorList>
    </citation>
    <scope>NUCLEOTIDE SEQUENCE [LARGE SCALE GENOMIC DNA]</scope>
    <source>
        <strain>A0248</strain>
    </source>
</reference>
<evidence type="ECO:0000255" key="1">
    <source>
        <dbReference type="HAMAP-Rule" id="MF_00052"/>
    </source>
</evidence>
<evidence type="ECO:0000255" key="2">
    <source>
        <dbReference type="PROSITE-ProRule" id="PRU01319"/>
    </source>
</evidence>
<keyword id="KW-0963">Cytoplasm</keyword>
<keyword id="KW-0255">Endonuclease</keyword>
<keyword id="KW-0378">Hydrolase</keyword>
<keyword id="KW-0464">Manganese</keyword>
<keyword id="KW-0479">Metal-binding</keyword>
<keyword id="KW-0540">Nuclease</keyword>
<accession>C3P5N8</accession>
<gene>
    <name evidence="1" type="primary">rnhB</name>
    <name type="ordered locus">BAA_3998</name>
</gene>
<sequence>MQKVTIQEAEHLLQEIISEEDDRFQILIKDERKGVQKLISKWYKQKELAQKEKEKFLEMSKYENALREKGLTYIAGIDEVGRGPLAGPVVTAAVILPEDFYIPGLNDSKKLSEAKRERFYGEIKAKAIAIGVGIVSPQVIDEINIYQATKQAMLDAIANLSCTPEYLLIDAMKLPAPIPQTSIIKGDAKSISISAASIIAKVTRDRMMKELGEKYPAYGFEQHMGYGTKQHLEAIEAHGVLEEHRKSFAPIKDMIKK</sequence>
<dbReference type="EC" id="3.1.26.4" evidence="1"/>
<dbReference type="EMBL" id="CP001598">
    <property type="protein sequence ID" value="ACQ47008.1"/>
    <property type="molecule type" value="Genomic_DNA"/>
</dbReference>
<dbReference type="RefSeq" id="WP_001174712.1">
    <property type="nucleotide sequence ID" value="NC_012659.1"/>
</dbReference>
<dbReference type="SMR" id="C3P5N8"/>
<dbReference type="GeneID" id="45023665"/>
<dbReference type="KEGG" id="bai:BAA_3998"/>
<dbReference type="HOGENOM" id="CLU_036532_2_1_9"/>
<dbReference type="GO" id="GO:0005737">
    <property type="term" value="C:cytoplasm"/>
    <property type="evidence" value="ECO:0007669"/>
    <property type="project" value="UniProtKB-SubCell"/>
</dbReference>
<dbReference type="GO" id="GO:0032299">
    <property type="term" value="C:ribonuclease H2 complex"/>
    <property type="evidence" value="ECO:0007669"/>
    <property type="project" value="TreeGrafter"/>
</dbReference>
<dbReference type="GO" id="GO:0030145">
    <property type="term" value="F:manganese ion binding"/>
    <property type="evidence" value="ECO:0007669"/>
    <property type="project" value="UniProtKB-UniRule"/>
</dbReference>
<dbReference type="GO" id="GO:0003723">
    <property type="term" value="F:RNA binding"/>
    <property type="evidence" value="ECO:0007669"/>
    <property type="project" value="InterPro"/>
</dbReference>
<dbReference type="GO" id="GO:0004523">
    <property type="term" value="F:RNA-DNA hybrid ribonuclease activity"/>
    <property type="evidence" value="ECO:0007669"/>
    <property type="project" value="UniProtKB-UniRule"/>
</dbReference>
<dbReference type="GO" id="GO:0043137">
    <property type="term" value="P:DNA replication, removal of RNA primer"/>
    <property type="evidence" value="ECO:0007669"/>
    <property type="project" value="TreeGrafter"/>
</dbReference>
<dbReference type="GO" id="GO:0006298">
    <property type="term" value="P:mismatch repair"/>
    <property type="evidence" value="ECO:0007669"/>
    <property type="project" value="TreeGrafter"/>
</dbReference>
<dbReference type="CDD" id="cd07182">
    <property type="entry name" value="RNase_HII_bacteria_HII_like"/>
    <property type="match status" value="1"/>
</dbReference>
<dbReference type="FunFam" id="3.30.420.10:FF:000006">
    <property type="entry name" value="Ribonuclease HII"/>
    <property type="match status" value="1"/>
</dbReference>
<dbReference type="Gene3D" id="3.30.420.10">
    <property type="entry name" value="Ribonuclease H-like superfamily/Ribonuclease H"/>
    <property type="match status" value="1"/>
</dbReference>
<dbReference type="HAMAP" id="MF_00052_B">
    <property type="entry name" value="RNase_HII_B"/>
    <property type="match status" value="1"/>
</dbReference>
<dbReference type="InterPro" id="IPR022898">
    <property type="entry name" value="RNase_HII"/>
</dbReference>
<dbReference type="InterPro" id="IPR001352">
    <property type="entry name" value="RNase_HII/HIII"/>
</dbReference>
<dbReference type="InterPro" id="IPR024567">
    <property type="entry name" value="RNase_HII/HIII_dom"/>
</dbReference>
<dbReference type="InterPro" id="IPR012337">
    <property type="entry name" value="RNaseH-like_sf"/>
</dbReference>
<dbReference type="InterPro" id="IPR036397">
    <property type="entry name" value="RNaseH_sf"/>
</dbReference>
<dbReference type="NCBIfam" id="NF000594">
    <property type="entry name" value="PRK00015.1-1"/>
    <property type="match status" value="1"/>
</dbReference>
<dbReference type="NCBIfam" id="NF000595">
    <property type="entry name" value="PRK00015.1-3"/>
    <property type="match status" value="1"/>
</dbReference>
<dbReference type="PANTHER" id="PTHR10954">
    <property type="entry name" value="RIBONUCLEASE H2 SUBUNIT A"/>
    <property type="match status" value="1"/>
</dbReference>
<dbReference type="PANTHER" id="PTHR10954:SF18">
    <property type="entry name" value="RIBONUCLEASE HII"/>
    <property type="match status" value="1"/>
</dbReference>
<dbReference type="Pfam" id="PF01351">
    <property type="entry name" value="RNase_HII"/>
    <property type="match status" value="1"/>
</dbReference>
<dbReference type="SUPFAM" id="SSF53098">
    <property type="entry name" value="Ribonuclease H-like"/>
    <property type="match status" value="1"/>
</dbReference>
<dbReference type="PROSITE" id="PS51975">
    <property type="entry name" value="RNASE_H_2"/>
    <property type="match status" value="1"/>
</dbReference>
<name>RNH2_BACAA</name>
<protein>
    <recommendedName>
        <fullName evidence="1">Ribonuclease HII</fullName>
        <shortName evidence="1">RNase HII</shortName>
        <ecNumber evidence="1">3.1.26.4</ecNumber>
    </recommendedName>
</protein>
<feature type="chain" id="PRO_1000194440" description="Ribonuclease HII">
    <location>
        <begin position="1"/>
        <end position="257"/>
    </location>
</feature>
<feature type="domain" description="RNase H type-2" evidence="2">
    <location>
        <begin position="72"/>
        <end position="257"/>
    </location>
</feature>
<feature type="binding site" evidence="1">
    <location>
        <position position="78"/>
    </location>
    <ligand>
        <name>a divalent metal cation</name>
        <dbReference type="ChEBI" id="CHEBI:60240"/>
    </ligand>
</feature>
<feature type="binding site" evidence="1">
    <location>
        <position position="79"/>
    </location>
    <ligand>
        <name>a divalent metal cation</name>
        <dbReference type="ChEBI" id="CHEBI:60240"/>
    </ligand>
</feature>
<feature type="binding site" evidence="1">
    <location>
        <position position="170"/>
    </location>
    <ligand>
        <name>a divalent metal cation</name>
        <dbReference type="ChEBI" id="CHEBI:60240"/>
    </ligand>
</feature>